<evidence type="ECO:0000255" key="1"/>
<evidence type="ECO:0000255" key="2">
    <source>
        <dbReference type="HAMAP-Rule" id="MF_01231"/>
    </source>
</evidence>
<evidence type="ECO:0000269" key="3">
    <source>
    </source>
</evidence>
<evidence type="ECO:0000269" key="4">
    <source>
    </source>
</evidence>
<evidence type="ECO:0000269" key="5">
    <source>
    </source>
</evidence>
<evidence type="ECO:0000269" key="6">
    <source>
    </source>
</evidence>
<evidence type="ECO:0000269" key="7">
    <source>
    </source>
</evidence>
<evidence type="ECO:0000269" key="8">
    <source>
    </source>
</evidence>
<evidence type="ECO:0000269" key="9">
    <source>
    </source>
</evidence>
<evidence type="ECO:0000303" key="10">
    <source>
    </source>
</evidence>
<evidence type="ECO:0000303" key="11">
    <source>
    </source>
</evidence>
<evidence type="ECO:0000305" key="12">
    <source>
    </source>
</evidence>
<evidence type="ECO:0000305" key="13">
    <source>
    </source>
</evidence>
<evidence type="ECO:0000305" key="14">
    <source>
    </source>
</evidence>
<evidence type="ECO:0000305" key="15">
    <source>
    </source>
</evidence>
<evidence type="ECO:0000305" key="16">
    <source>
    </source>
</evidence>
<evidence type="ECO:0000312" key="17">
    <source>
        <dbReference type="EMBL" id="BAI96793.1"/>
    </source>
</evidence>
<evidence type="ECO:0007744" key="18">
    <source>
        <dbReference type="PDB" id="1IZ7"/>
    </source>
</evidence>
<evidence type="ECO:0007744" key="19">
    <source>
        <dbReference type="PDB" id="1IZ8"/>
    </source>
</evidence>
<evidence type="ECO:0007744" key="20">
    <source>
        <dbReference type="PDB" id="1K5P"/>
    </source>
</evidence>
<evidence type="ECO:0007744" key="21">
    <source>
        <dbReference type="PDB" id="1K63"/>
    </source>
</evidence>
<evidence type="ECO:0007744" key="22">
    <source>
        <dbReference type="PDB" id="1K6E"/>
    </source>
</evidence>
<evidence type="ECO:0007744" key="23">
    <source>
        <dbReference type="PDB" id="1MJ5"/>
    </source>
</evidence>
<evidence type="ECO:0007744" key="24">
    <source>
        <dbReference type="PDB" id="2BFN"/>
    </source>
</evidence>
<evidence type="ECO:0007744" key="25">
    <source>
        <dbReference type="PDB" id="4WDQ"/>
    </source>
</evidence>
<evidence type="ECO:0007744" key="26">
    <source>
        <dbReference type="PDB" id="4WDR"/>
    </source>
</evidence>
<evidence type="ECO:0007744" key="27">
    <source>
        <dbReference type="PDB" id="5LKA"/>
    </source>
</evidence>
<evidence type="ECO:0007829" key="28">
    <source>
        <dbReference type="PDB" id="1MJ5"/>
    </source>
</evidence>
<evidence type="ECO:0007829" key="29">
    <source>
        <dbReference type="PDB" id="6S06"/>
    </source>
</evidence>
<protein>
    <recommendedName>
        <fullName evidence="2 11">Haloalkane dehalogenase</fullName>
        <ecNumber evidence="2 9">3.8.1.5</ecNumber>
    </recommendedName>
    <alternativeName>
        <fullName evidence="11">1,3,4,6-tetrachloro-1,4-cyclohexadiene halidohydrolase</fullName>
        <shortName evidence="11">1,4-TCDN halidohydrolase</shortName>
    </alternativeName>
</protein>
<name>LINB_SPHIU</name>
<accession>D4Z2G1</accession>
<accession>P51698</accession>
<reference key="1">
    <citation type="journal article" date="1993" name="J. Bacteriol.">
        <title>Cloning and sequencing of a dehalogenase gene encoding an enzyme with hydrolase activity involved in the degradation of gamma-hexachlorocyclohexane in Pseudomonas paucimobilis.</title>
        <authorList>
            <person name="Nagata Y."/>
            <person name="Nariya T."/>
            <person name="Ohtomo R."/>
            <person name="Fukuda M."/>
            <person name="Yano K."/>
            <person name="Takagi M."/>
        </authorList>
    </citation>
    <scope>NUCLEOTIDE SEQUENCE [GENOMIC DNA]</scope>
    <scope>PROTEIN SEQUENCE OF 2-16</scope>
    <scope>FUNCTION</scope>
    <scope>CATALYTIC ACTIVITY</scope>
    <scope>PATHWAY</scope>
    <source>
        <strain>DSM 16413 / CCM 7287 / MTCC 6362 / UT26 / NBRC 101211 / UT26S</strain>
    </source>
</reference>
<reference key="2">
    <citation type="submission" date="1999-03" db="EMBL/GenBank/DDBJ databases">
        <authorList>
            <person name="Nagata Y."/>
            <person name="Nariya T."/>
            <person name="Ohtomo R."/>
            <person name="Fukuda M."/>
            <person name="Yano K."/>
            <person name="Takagi M."/>
        </authorList>
    </citation>
    <scope>SEQUENCE REVISION</scope>
</reference>
<reference key="3">
    <citation type="journal article" date="2010" name="J. Bacteriol.">
        <title>Complete genome sequence of the representative gamma-hexachlorocyclohexane-degrading bacterium Sphingobium japonicum UT26.</title>
        <authorList>
            <person name="Nagata Y."/>
            <person name="Ohtsubo Y."/>
            <person name="Endo R."/>
            <person name="Ichikawa N."/>
            <person name="Ankai A."/>
            <person name="Oguchi A."/>
            <person name="Fukui S."/>
            <person name="Fujita N."/>
            <person name="Tsuda M."/>
        </authorList>
    </citation>
    <scope>NUCLEOTIDE SEQUENCE [LARGE SCALE GENOMIC DNA]</scope>
    <source>
        <strain>DSM 16413 / CCM 7287 / MTCC 6362 / UT26 / NBRC 101211 / UT26S</strain>
    </source>
</reference>
<reference key="4">
    <citation type="journal article" date="1999" name="J. Bacteriol.">
        <title>Two different types of dehalogenases, LinA and LinB, involved in gamma-hexachlorocyclohexane degradation in Sphingomonas paucimobilis UT26 are localized in the periplasmic space without molecular processing.</title>
        <authorList>
            <person name="Nagata Y."/>
            <person name="Futamura A."/>
            <person name="Miyauchi K."/>
            <person name="Takagi M."/>
        </authorList>
    </citation>
    <scope>PROTEIN SEQUENCE OF 2-10</scope>
    <scope>SUBCELLULAR LOCATION</scope>
    <source>
        <strain>DSM 16413 / CCM 7287 / MTCC 6362 / UT26 / NBRC 101211 / UT26S</strain>
    </source>
</reference>
<reference key="5">
    <citation type="journal article" date="1997" name="Appl. Environ. Microbiol.">
        <title>Purification and characterization of a haloalkane dehalogenase of a new substrate class from a gamma-hexachlorocyclohexane-degrading bacterium, Sphingomonas paucimobilis UT26.</title>
        <authorList>
            <person name="Nagata Y."/>
            <person name="Miyauchi K."/>
            <person name="Damborsky J."/>
            <person name="Manova K."/>
            <person name="Ansorgova A."/>
            <person name="Takagi M."/>
        </authorList>
    </citation>
    <scope>FUNCTION</scope>
    <scope>CATALYTIC ACTIVITY</scope>
    <scope>BIOPHYSICOCHEMICAL PROPERTIES</scope>
    <scope>SUBSTRATE SPECIFICITY</scope>
    <scope>SUBUNIT</scope>
    <source>
        <strain>DSM 16413 / CCM 7287 / MTCC 6362 / UT26 / NBRC 101211 / UT26S</strain>
    </source>
</reference>
<reference key="6">
    <citation type="journal article" date="1999" name="FEBS Lett.">
        <title>Identification of the catalytic triad in the haloalkane dehalogenase from Sphingomonas paucimobilis UT26.</title>
        <authorList>
            <person name="Hynkova K."/>
            <person name="Nagata Y."/>
            <person name="Takagi M."/>
            <person name="Damborsky J."/>
        </authorList>
    </citation>
    <scope>FUNCTION</scope>
    <scope>CATALYTIC ACTIVITY</scope>
    <scope>BIOPHYSICOCHEMICAL PROPERTIES</scope>
    <scope>MUTAGENESIS OF ASP-108; GLU-132; GLU-244 AND HIS-272</scope>
    <scope>ACTIVE SITE</scope>
    <source>
        <strain>DSM 16413 / CCM 7287 / MTCC 6362 / UT26 / NBRC 101211 / UT26S</strain>
    </source>
</reference>
<reference key="7">
    <citation type="journal article" date="2002" name="Biochemistry">
        <title>Halide-stabilizing residues of haloalkane dehalogenases studied by quantum mechanic calculations and site-directed mutagenesis.</title>
        <authorList>
            <person name="Bohac M."/>
            <person name="Nagata Y."/>
            <person name="Prokop Z."/>
            <person name="Prokop M."/>
            <person name="Monincova M."/>
            <person name="Tsuda M."/>
            <person name="Koca J."/>
            <person name="Damborsky J."/>
        </authorList>
    </citation>
    <scope>QUANTUM MECHANIC STUDIES</scope>
    <scope>MUTAGENESIS OF ASN-38; TRP-109; PHE-151 AND PHE-169</scope>
</reference>
<reference key="8">
    <citation type="journal article" date="1999" name="Acta Crystallogr. D">
        <title>Crystallization and preliminary X-ray diffraction analysis of haloalkane dehalogenase LinB from Sphingomonas paucimobilis UT26.</title>
        <authorList>
            <person name="Smatanova I.K."/>
            <person name="Nagata Y."/>
            <person name="Svensson L.A."/>
            <person name="Takagi M."/>
            <person name="Marek J."/>
        </authorList>
    </citation>
    <scope>CRYSTALLIZATION</scope>
    <source>
        <strain>DSM 16413 / CCM 7287 / MTCC 6362 / UT26 / NBRC 101211 / UT26S</strain>
    </source>
</reference>
<reference key="9">
    <citation type="journal article" date="2000" name="Biochemistry">
        <title>Crystal structure of the haloalkane dehalogenase from Sphingomonas paucimobilis UT26.</title>
        <authorList>
            <person name="Marek J."/>
            <person name="Vevodova J."/>
            <person name="Smatanova I.K."/>
            <person name="Nagata Y."/>
            <person name="Svensson L.A."/>
            <person name="Newman J."/>
            <person name="Takagi M."/>
            <person name="Damborsky J."/>
        </authorList>
    </citation>
    <scope>X-RAY CRYSTALLOGRAPHY (1.58 ANGSTROMS) OF NATIVE PROTEIN AND COMPLEX WITH 1,3-PROPANEDIOL</scope>
    <source>
        <strain>DSM 16413 / CCM 7287 / MTCC 6362 / UT26 / NBRC 101211 / UT26S</strain>
    </source>
</reference>
<reference key="10">
    <citation type="journal article" date="2002" name="Biochemistry">
        <title>Exploring the structure and activity of haloalkane dehalogenase from Sphingomonas paucimobilis UT26: evidence for product- and water-mediated inhibition.</title>
        <authorList>
            <person name="Oakley A.J."/>
            <person name="Prokop Z."/>
            <person name="Bohac M."/>
            <person name="Kmunicek J."/>
            <person name="Jedlicka T."/>
            <person name="Monincova M."/>
            <person name="Kuta-Smatanova I."/>
            <person name="Nagata Y."/>
            <person name="Damborsky J."/>
            <person name="Wilce M.C.J."/>
        </authorList>
    </citation>
    <scope>X-RAY CRYSTALLOGRAPHY (1.8 ANGSTROMS) OF COMPLEXES WITH 1,2-DICHLOROETHANE; 1,2-DICHLOROPROPANE AND BUTAN-1-OL</scope>
    <source>
        <strain>DSM 16413 / CCM 7287 / MTCC 6362 / UT26 / NBRC 101211 / UT26S</strain>
    </source>
</reference>
<reference evidence="18 19 20 21 22" key="11">
    <citation type="journal article" date="2003" name="Biochemistry">
        <title>Haloalkane dehalogenase LinB from Sphingomonas paucimobilis UT26: X-ray crystallographic studies of dehalogenation of brominated substrates.</title>
        <authorList>
            <person name="Streltsov V.A."/>
            <person name="Prokop Z."/>
            <person name="Damborsky J."/>
            <person name="Nagata Y."/>
            <person name="Oakley A."/>
            <person name="Wilce M.C."/>
        </authorList>
    </citation>
    <scope>X-RAY CRYSTALLOGRAPHY (1.58 ANGSTROMS) OF NATIVE PROTEIN AND COMPLEXES WITH 1,2-PROPANEDIOL; 1-BROMOPROPAN-2-OL AND 2-BROMO-2-PROPEN-1-OL</scope>
    <scope>ACTIVE SITE</scope>
    <source>
        <strain>DSM 16413 / CCM 7287 / MTCC 6362 / UT26 / NBRC 101211 / UT26S</strain>
    </source>
</reference>
<reference evidence="23" key="12">
    <citation type="journal article" date="2004" name="Biochemistry">
        <title>Crystal structure of haloalkane dehalogenase LinB from Sphingomonas paucimobilis UT26 at 0.95 A resolution: dynamics of catalytic residues.</title>
        <authorList>
            <person name="Oakley A.J."/>
            <person name="Klvana M."/>
            <person name="Otyepka M."/>
            <person name="Nagata Y."/>
            <person name="Wilce M.C."/>
            <person name="Damborsky J."/>
        </authorList>
    </citation>
    <scope>X-RAY CRYSTALLOGRAPHY (0.95 ANGSTROMS) IN COMPLEX WITH CHLORIDE</scope>
    <scope>ACTIVE SITE</scope>
    <source>
        <strain>DSM 16413 / CCM 7287 / MTCC 6362 / UT26 / NBRC 101211 / UT26S</strain>
    </source>
</reference>
<reference evidence="24" key="13">
    <citation type="journal article" date="2007" name="Appl. Environ. Microbiol.">
        <title>Weak activity of haloalkane dehalogenase LinB with 1,2,3-trichloropropane revealed by X-Ray crystallography and microcalorimetry.</title>
        <authorList>
            <person name="Monincova M."/>
            <person name="Prokop Z."/>
            <person name="Vevodova J."/>
            <person name="Nagata Y."/>
            <person name="Damborsky J."/>
        </authorList>
    </citation>
    <scope>X-RAY CRYSTALLOGRAPHY (1.60 ANGSTROMS) IN COMPLEX WITH 2,3-DICHLOROPROPAN-1-OL AND CHLORIDE</scope>
</reference>
<reference evidence="25 26 27" key="14">
    <citation type="journal article" date="2016" name="ACS Catal.">
        <title>Engineering a de novo transport tunnel.</title>
        <authorList>
            <person name="Brezovsky J."/>
            <person name="Babkova P."/>
            <person name="Degtjarik O."/>
            <person name="Fortova A."/>
            <person name="Gora A."/>
            <person name="Iermak I."/>
            <person name="Rezacova P."/>
            <person name="Dvorak P."/>
            <person name="Kuta Smatanova I."/>
            <person name="Prokop Z."/>
            <person name="Chaloupkova R."/>
            <person name="Damborsky J."/>
        </authorList>
    </citation>
    <scope>X-RAY CRYSTALLOGRAPHY (1.30 ANGSTROMS) OF WILD-TYPE AND MUTANTS TRP-177 AND ALA-140/LEU-143/TRP-177/LEU-211</scope>
    <scope>MUTAGENESIS STUDIES</scope>
</reference>
<proteinExistence type="evidence at protein level"/>
<feature type="initiator methionine" description="Removed" evidence="4 8">
    <location>
        <position position="1"/>
    </location>
</feature>
<feature type="chain" id="PRO_0000216778" description="Haloalkane dehalogenase">
    <location>
        <begin position="2"/>
        <end position="296"/>
    </location>
</feature>
<feature type="domain" description="AB hydrolase-1" evidence="1">
    <location>
        <begin position="31"/>
        <end position="155"/>
    </location>
</feature>
<feature type="active site" description="Nucleophile" evidence="12 14 15">
    <location>
        <position position="108"/>
    </location>
</feature>
<feature type="active site" description="Proton donor" evidence="12 14 15">
    <location>
        <position position="132"/>
    </location>
</feature>
<feature type="active site" description="Proton acceptor" evidence="12 14 15">
    <location>
        <position position="272"/>
    </location>
</feature>
<feature type="binding site" evidence="6">
    <location>
        <position position="38"/>
    </location>
    <ligand>
        <name>chloride</name>
        <dbReference type="ChEBI" id="CHEBI:17996"/>
    </ligand>
</feature>
<feature type="binding site" evidence="6 7 23 24">
    <location>
        <position position="109"/>
    </location>
    <ligand>
        <name>chloride</name>
        <dbReference type="ChEBI" id="CHEBI:17996"/>
    </ligand>
</feature>
<feature type="mutagenesis site" description="Loss of activity." evidence="5">
    <original>N</original>
    <variation>D</variation>
    <variation>E</variation>
    <variation>F</variation>
    <variation>Q</variation>
    <location>
        <position position="38"/>
    </location>
</feature>
<feature type="mutagenesis site" description="Loss of activity." evidence="3">
    <original>D</original>
    <variation>A</variation>
    <location>
        <position position="108"/>
    </location>
</feature>
<feature type="mutagenesis site" description="58% of wild-type activity." evidence="3">
    <original>D</original>
    <variation>N</variation>
    <location>
        <position position="108"/>
    </location>
</feature>
<feature type="mutagenesis site" description="Loss of activity." evidence="5">
    <original>W</original>
    <variation>L</variation>
    <location>
        <position position="109"/>
    </location>
</feature>
<feature type="mutagenesis site" description="Loss of activity." evidence="3">
    <original>E</original>
    <variation>Q</variation>
    <location>
        <position position="132"/>
    </location>
</feature>
<feature type="mutagenesis site" description="Increase in activity." evidence="5">
    <original>F</original>
    <variation>L</variation>
    <variation>W</variation>
    <variation>Y</variation>
    <location>
        <position position="151"/>
    </location>
</feature>
<feature type="mutagenesis site" description="31% of wild-type activity." evidence="5">
    <original>F</original>
    <variation>L</variation>
    <location>
        <position position="169"/>
    </location>
</feature>
<feature type="mutagenesis site" description="38% of wild-type activity." evidence="3">
    <original>E</original>
    <variation>Q</variation>
    <location>
        <position position="244"/>
    </location>
</feature>
<feature type="mutagenesis site" description="Loss of activity." evidence="3">
    <original>H</original>
    <variation>A</variation>
    <location>
        <position position="272"/>
    </location>
</feature>
<feature type="strand" evidence="28">
    <location>
        <begin position="12"/>
        <end position="16"/>
    </location>
</feature>
<feature type="strand" evidence="28">
    <location>
        <begin position="19"/>
        <end position="27"/>
    </location>
</feature>
<feature type="strand" evidence="28">
    <location>
        <begin position="29"/>
        <end position="35"/>
    </location>
</feature>
<feature type="helix" evidence="28">
    <location>
        <begin position="42"/>
        <end position="45"/>
    </location>
</feature>
<feature type="turn" evidence="28">
    <location>
        <begin position="46"/>
        <end position="48"/>
    </location>
</feature>
<feature type="helix" evidence="28">
    <location>
        <begin position="49"/>
        <end position="52"/>
    </location>
</feature>
<feature type="strand" evidence="28">
    <location>
        <begin position="55"/>
        <end position="61"/>
    </location>
</feature>
<feature type="turn" evidence="29">
    <location>
        <begin position="77"/>
        <end position="80"/>
    </location>
</feature>
<feature type="helix" evidence="28">
    <location>
        <begin position="82"/>
        <end position="95"/>
    </location>
</feature>
<feature type="strand" evidence="28">
    <location>
        <begin position="102"/>
        <end position="107"/>
    </location>
</feature>
<feature type="helix" evidence="28">
    <location>
        <begin position="108"/>
        <end position="120"/>
    </location>
</feature>
<feature type="helix" evidence="28">
    <location>
        <begin position="121"/>
        <end position="124"/>
    </location>
</feature>
<feature type="strand" evidence="28">
    <location>
        <begin position="125"/>
        <end position="132"/>
    </location>
</feature>
<feature type="helix" evidence="28">
    <location>
        <begin position="140"/>
        <end position="142"/>
    </location>
</feature>
<feature type="helix" evidence="28">
    <location>
        <begin position="145"/>
        <end position="147"/>
    </location>
</feature>
<feature type="helix" evidence="28">
    <location>
        <begin position="148"/>
        <end position="155"/>
    </location>
</feature>
<feature type="helix" evidence="28">
    <location>
        <begin position="159"/>
        <end position="163"/>
    </location>
</feature>
<feature type="turn" evidence="28">
    <location>
        <begin position="164"/>
        <end position="166"/>
    </location>
</feature>
<feature type="helix" evidence="28">
    <location>
        <begin position="168"/>
        <end position="171"/>
    </location>
</feature>
<feature type="helix" evidence="28">
    <location>
        <begin position="173"/>
        <end position="176"/>
    </location>
</feature>
<feature type="strand" evidence="28">
    <location>
        <begin position="178"/>
        <end position="180"/>
    </location>
</feature>
<feature type="helix" evidence="28">
    <location>
        <begin position="184"/>
        <end position="191"/>
    </location>
</feature>
<feature type="helix" evidence="28">
    <location>
        <begin position="192"/>
        <end position="194"/>
    </location>
</feature>
<feature type="strand" evidence="28">
    <location>
        <begin position="196"/>
        <end position="198"/>
    </location>
</feature>
<feature type="helix" evidence="28">
    <location>
        <begin position="199"/>
        <end position="201"/>
    </location>
</feature>
<feature type="helix" evidence="28">
    <location>
        <begin position="202"/>
        <end position="206"/>
    </location>
</feature>
<feature type="helix" evidence="28">
    <location>
        <begin position="208"/>
        <end position="210"/>
    </location>
</feature>
<feature type="helix" evidence="28">
    <location>
        <begin position="218"/>
        <end position="231"/>
    </location>
</feature>
<feature type="strand" evidence="28">
    <location>
        <begin position="238"/>
        <end position="245"/>
    </location>
</feature>
<feature type="strand" evidence="28">
    <location>
        <begin position="247"/>
        <end position="250"/>
    </location>
</feature>
<feature type="helix" evidence="28">
    <location>
        <begin position="251"/>
        <end position="257"/>
    </location>
</feature>
<feature type="strand" evidence="28">
    <location>
        <begin position="261"/>
        <end position="272"/>
    </location>
</feature>
<feature type="helix" evidence="28">
    <location>
        <begin position="274"/>
        <end position="276"/>
    </location>
</feature>
<feature type="helix" evidence="28">
    <location>
        <begin position="279"/>
        <end position="293"/>
    </location>
</feature>
<keyword id="KW-0002">3D-structure</keyword>
<keyword id="KW-0216">Detoxification</keyword>
<keyword id="KW-0903">Direct protein sequencing</keyword>
<keyword id="KW-0378">Hydrolase</keyword>
<keyword id="KW-0574">Periplasm</keyword>
<keyword id="KW-1185">Reference proteome</keyword>
<dbReference type="EC" id="3.8.1.5" evidence="2 9"/>
<dbReference type="EMBL" id="D14594">
    <property type="protein sequence ID" value="BAA03443.2"/>
    <property type="molecule type" value="Genomic_DNA"/>
</dbReference>
<dbReference type="EMBL" id="AP010803">
    <property type="protein sequence ID" value="BAI96793.1"/>
    <property type="molecule type" value="Genomic_DNA"/>
</dbReference>
<dbReference type="PIR" id="A49896">
    <property type="entry name" value="A49896"/>
</dbReference>
<dbReference type="RefSeq" id="WP_013040256.1">
    <property type="nucleotide sequence ID" value="NC_014006.1"/>
</dbReference>
<dbReference type="PDB" id="1CV2">
    <property type="method" value="X-ray"/>
    <property type="resolution" value="1.58 A"/>
    <property type="chains" value="A=1-296"/>
</dbReference>
<dbReference type="PDB" id="1D07">
    <property type="method" value="X-ray"/>
    <property type="resolution" value="2.00 A"/>
    <property type="chains" value="A=1-296"/>
</dbReference>
<dbReference type="PDB" id="1G42">
    <property type="method" value="X-ray"/>
    <property type="resolution" value="1.80 A"/>
    <property type="chains" value="A=1-296"/>
</dbReference>
<dbReference type="PDB" id="1G4H">
    <property type="method" value="X-ray"/>
    <property type="resolution" value="1.80 A"/>
    <property type="chains" value="A=1-296"/>
</dbReference>
<dbReference type="PDB" id="1G5F">
    <property type="method" value="X-ray"/>
    <property type="resolution" value="1.80 A"/>
    <property type="chains" value="A=1-296"/>
</dbReference>
<dbReference type="PDB" id="1IZ7">
    <property type="method" value="X-ray"/>
    <property type="resolution" value="1.58 A"/>
    <property type="chains" value="A=2-296"/>
</dbReference>
<dbReference type="PDB" id="1IZ8">
    <property type="method" value="X-ray"/>
    <property type="resolution" value="2.00 A"/>
    <property type="chains" value="A=2-296"/>
</dbReference>
<dbReference type="PDB" id="1K5P">
    <property type="method" value="X-ray"/>
    <property type="resolution" value="1.80 A"/>
    <property type="chains" value="A=2-296"/>
</dbReference>
<dbReference type="PDB" id="1K63">
    <property type="method" value="X-ray"/>
    <property type="resolution" value="1.80 A"/>
    <property type="chains" value="A=2-296"/>
</dbReference>
<dbReference type="PDB" id="1K6E">
    <property type="method" value="X-ray"/>
    <property type="resolution" value="1.85 A"/>
    <property type="chains" value="A=2-296"/>
</dbReference>
<dbReference type="PDB" id="1MJ5">
    <property type="method" value="X-ray"/>
    <property type="resolution" value="0.95 A"/>
    <property type="chains" value="A=1-296"/>
</dbReference>
<dbReference type="PDB" id="2BFN">
    <property type="method" value="X-ray"/>
    <property type="resolution" value="1.60 A"/>
    <property type="chains" value="A=1-296"/>
</dbReference>
<dbReference type="PDB" id="4WDQ">
    <property type="method" value="X-ray"/>
    <property type="resolution" value="1.58 A"/>
    <property type="chains" value="A=2-296"/>
</dbReference>
<dbReference type="PDB" id="4WDR">
    <property type="method" value="X-ray"/>
    <property type="resolution" value="2.50 A"/>
    <property type="chains" value="A/B=4-296"/>
</dbReference>
<dbReference type="PDB" id="5LKA">
    <property type="method" value="X-ray"/>
    <property type="resolution" value="1.30 A"/>
    <property type="chains" value="A=2-296"/>
</dbReference>
<dbReference type="PDB" id="6S06">
    <property type="method" value="X-ray"/>
    <property type="resolution" value="1.15 A"/>
    <property type="chains" value="A=1-296"/>
</dbReference>
<dbReference type="PDB" id="7NFZ">
    <property type="method" value="X-ray"/>
    <property type="resolution" value="1.55 A"/>
    <property type="chains" value="A=1-296"/>
</dbReference>
<dbReference type="PDBsum" id="1CV2"/>
<dbReference type="PDBsum" id="1D07"/>
<dbReference type="PDBsum" id="1G42"/>
<dbReference type="PDBsum" id="1G4H"/>
<dbReference type="PDBsum" id="1G5F"/>
<dbReference type="PDBsum" id="1IZ7"/>
<dbReference type="PDBsum" id="1IZ8"/>
<dbReference type="PDBsum" id="1K5P"/>
<dbReference type="PDBsum" id="1K63"/>
<dbReference type="PDBsum" id="1K6E"/>
<dbReference type="PDBsum" id="1MJ5"/>
<dbReference type="PDBsum" id="2BFN"/>
<dbReference type="PDBsum" id="4WDQ"/>
<dbReference type="PDBsum" id="4WDR"/>
<dbReference type="PDBsum" id="5LKA"/>
<dbReference type="PDBsum" id="6S06"/>
<dbReference type="PDBsum" id="7NFZ"/>
<dbReference type="SMR" id="D4Z2G1"/>
<dbReference type="STRING" id="452662.SJA_C1-19590"/>
<dbReference type="DrugBank" id="DB03335">
    <property type="generic name" value="(+)-1-bromo-2-propanol"/>
</dbReference>
<dbReference type="DrugBank" id="DB01701">
    <property type="generic name" value="1,2-Dichloro-Propane"/>
</dbReference>
<dbReference type="DrugBank" id="DB02774">
    <property type="generic name" value="1,3-Propanediol"/>
</dbReference>
<dbReference type="DrugBank" id="DB04320">
    <property type="generic name" value="2-Bromo-2-Propene-1-Ol"/>
</dbReference>
<dbReference type="DrugBank" id="DB02145">
    <property type="generic name" value="Butyl alcohol"/>
</dbReference>
<dbReference type="DrugBank" id="DB03733">
    <property type="generic name" value="Ethylene Dichloride"/>
</dbReference>
<dbReference type="DrugBank" id="DB02302">
    <property type="generic name" value="Symmetric dimethylarginine"/>
</dbReference>
<dbReference type="ESTHER" id="sphpi-linb">
    <property type="family name" value="Haloalkane_dehalogenase-HLD2"/>
</dbReference>
<dbReference type="GeneID" id="29273551"/>
<dbReference type="KEGG" id="sjp:SJA_C1-19590"/>
<dbReference type="eggNOG" id="COG0596">
    <property type="taxonomic scope" value="Bacteria"/>
</dbReference>
<dbReference type="HOGENOM" id="CLU_020336_13_3_5"/>
<dbReference type="BRENDA" id="3.8.1.5">
    <property type="organism ID" value="10293"/>
</dbReference>
<dbReference type="SABIO-RK" id="D4Z2G1"/>
<dbReference type="UniPathway" id="UPA00689"/>
<dbReference type="EvolutionaryTrace" id="D4Z2G1"/>
<dbReference type="Proteomes" id="UP000007753">
    <property type="component" value="Chromosome 1"/>
</dbReference>
<dbReference type="GO" id="GO:0042597">
    <property type="term" value="C:periplasmic space"/>
    <property type="evidence" value="ECO:0007669"/>
    <property type="project" value="UniProtKB-SubCell"/>
</dbReference>
<dbReference type="GO" id="GO:0018786">
    <property type="term" value="F:haloalkane dehalogenase activity"/>
    <property type="evidence" value="ECO:0007669"/>
    <property type="project" value="UniProtKB-UniRule"/>
</dbReference>
<dbReference type="GO" id="GO:0009636">
    <property type="term" value="P:response to toxic substance"/>
    <property type="evidence" value="ECO:0007669"/>
    <property type="project" value="UniProtKB-KW"/>
</dbReference>
<dbReference type="Gene3D" id="3.40.50.1820">
    <property type="entry name" value="alpha/beta hydrolase"/>
    <property type="match status" value="1"/>
</dbReference>
<dbReference type="HAMAP" id="MF_01231">
    <property type="entry name" value="Haloalk_dehal_type2"/>
    <property type="match status" value="1"/>
</dbReference>
<dbReference type="InterPro" id="IPR000073">
    <property type="entry name" value="AB_hydrolase_1"/>
</dbReference>
<dbReference type="InterPro" id="IPR029058">
    <property type="entry name" value="AB_hydrolase_fold"/>
</dbReference>
<dbReference type="InterPro" id="IPR000639">
    <property type="entry name" value="Epox_hydrolase-like"/>
</dbReference>
<dbReference type="InterPro" id="IPR023594">
    <property type="entry name" value="Haloalkane_dehalogenase_2"/>
</dbReference>
<dbReference type="NCBIfam" id="NF002938">
    <property type="entry name" value="PRK03592.1"/>
    <property type="match status" value="1"/>
</dbReference>
<dbReference type="PANTHER" id="PTHR43329">
    <property type="entry name" value="EPOXIDE HYDROLASE"/>
    <property type="match status" value="1"/>
</dbReference>
<dbReference type="Pfam" id="PF00561">
    <property type="entry name" value="Abhydrolase_1"/>
    <property type="match status" value="1"/>
</dbReference>
<dbReference type="PRINTS" id="PR00412">
    <property type="entry name" value="EPOXHYDRLASE"/>
</dbReference>
<dbReference type="SUPFAM" id="SSF53474">
    <property type="entry name" value="alpha/beta-Hydrolases"/>
    <property type="match status" value="1"/>
</dbReference>
<gene>
    <name evidence="10 11" type="primary">linB</name>
    <name evidence="17" type="ordered locus">SJA_C1-19590</name>
</gene>
<comment type="function">
    <text evidence="3 8 9">Catalyzes hydrolytic cleavage of carbon-halogen bonds in halogenated aliphatic compounds, leading to the formation of the corresponding primary alcohols, halide ions and protons. Has a broad substrate specificity since not only monochloroalkanes (C3 to C10) but also dichloroalkanes (&gt; C3), bromoalkanes, and chlorinated aliphatic alcohols are good substrates (PubMed:10100638, PubMed:9293022). Shows almost no activity with 1,2-dichloroethane, but very high activity with the brominated analog (PubMed:9293022). Is involved in the degradation of the important environmental pollutant gamma-hexachlorocyclohexane (gamma-HCH or lindane) as it also catalyzes conversion of 1,3,4,6-tetrachloro-1,4-cyclohexadiene (1,4-TCDN) to 2,5-dichloro-2,5-cyclohexadiene-1,4-diol (2,5-DDOL) via the intermediate 2,4,5-trichloro-2,5-cyclohexadiene-1-ol (2,4,5-DNOL) (PubMed:7691794). This degradation pathway allows S.japonicum UT26 to grow on gamma-HCH as the sole source of carbon and energy.</text>
</comment>
<comment type="catalytic activity">
    <reaction evidence="2 3 9">
        <text>1-haloalkane + H2O = a halide anion + a primary alcohol + H(+)</text>
        <dbReference type="Rhea" id="RHEA:19081"/>
        <dbReference type="ChEBI" id="CHEBI:15377"/>
        <dbReference type="ChEBI" id="CHEBI:15378"/>
        <dbReference type="ChEBI" id="CHEBI:15734"/>
        <dbReference type="ChEBI" id="CHEBI:16042"/>
        <dbReference type="ChEBI" id="CHEBI:18060"/>
        <dbReference type="EC" id="3.8.1.5"/>
    </reaction>
</comment>
<comment type="catalytic activity">
    <reaction evidence="8">
        <text>(3R,6R)-1,3,4,6-tetrachlorocyclohexa-1,4-diene + 2 H2O = 2,5-dichlorocyclohexa-2,5-dien-1,4-diol + 2 chloride + 2 H(+)</text>
        <dbReference type="Rhea" id="RHEA:11944"/>
        <dbReference type="ChEBI" id="CHEBI:15377"/>
        <dbReference type="ChEBI" id="CHEBI:15378"/>
        <dbReference type="ChEBI" id="CHEBI:17996"/>
        <dbReference type="ChEBI" id="CHEBI:18904"/>
        <dbReference type="ChEBI" id="CHEBI:28975"/>
    </reaction>
</comment>
<comment type="activity regulation">
    <text>Competitively inhibited by the key pollutants 1,2-dichloroethane (1,2-DCE) and 1,2-dichloropropane (1,2-DCP).</text>
</comment>
<comment type="biophysicochemical properties">
    <kinetics>
        <KM evidence="9">1.9 mM for 1,2-dibromoethane</KM>
        <KM evidence="9">3.9 mM for 1-chloro-2-bromoethane</KM>
        <KM evidence="9">0.9 mM for 1,2-dibromopropane</KM>
        <KM evidence="9">0.05 mM for 1-bromo-2-methylpropane</KM>
        <KM evidence="9">0.7 mM for 2,3-dichloropropene</KM>
        <KM evidence="3">0.14 mM for 1-chlorobutane</KM>
        <text evidence="3">kcat is 0.98 sec(-1) with 1-chlorobutane as substrate.</text>
    </kinetics>
    <phDependence>
        <text evidence="9">Optimum pH is 8.2.</text>
    </phDependence>
</comment>
<comment type="pathway">
    <text evidence="16">Xenobiotic degradation; gamma-hexachlorocyclohexane degradation.</text>
</comment>
<comment type="subunit">
    <text evidence="9">Monomer.</text>
</comment>
<comment type="subcellular location">
    <subcellularLocation>
        <location evidence="4">Periplasm</location>
    </subcellularLocation>
</comment>
<comment type="induction">
    <text>Constitutively expressed.</text>
</comment>
<comment type="miscellaneous">
    <text evidence="13">Is not N-terminally processed during export, so it may be secreted into the periplasmic space via a hitherto unknown mechanism.</text>
</comment>
<comment type="similarity">
    <text evidence="2">Belongs to the haloalkane dehalogenase family. Type 2 subfamily.</text>
</comment>
<sequence>MSLGAKPFGEKKFIEIKGRRMAYIDEGTGDPILFQHGNPTSSYLWRNIMPHCAGLGRLIACDLIGMGDSDKLDPSGPERYAYAEHRDYLDALWEALDLGDRVVLVVHDWGSALGFDWARRHRERVQGIAYMEAIAMPIEWADFPEQDRDLFQAFRSQAGEELVLQDNVFVEQVLPGLILRPLSEAEMAAYREPFLAAGEARRPTLSWPRQIPIAGTPADVVAIARDYAGWLSESPIPKLFINAEPGALTTGRMRDFCRTWPNQTEITVAGAHFIQEDSPDEIGAAIAAFVRRLRPA</sequence>
<organism>
    <name type="scientific">Sphingobium indicum (strain DSM 16413 / CCM 7287 / MTCC 6362 / UT26 / NBRC 101211 / UT26S)</name>
    <name type="common">Sphingobium japonicum</name>
    <dbReference type="NCBI Taxonomy" id="452662"/>
    <lineage>
        <taxon>Bacteria</taxon>
        <taxon>Pseudomonadati</taxon>
        <taxon>Pseudomonadota</taxon>
        <taxon>Alphaproteobacteria</taxon>
        <taxon>Sphingomonadales</taxon>
        <taxon>Sphingomonadaceae</taxon>
        <taxon>Sphingobium</taxon>
    </lineage>
</organism>